<accession>P32182</accession>
<protein>
    <recommendedName>
        <fullName>Hepatocyte nuclear factor 3-beta</fullName>
        <shortName>HNF-3-beta</shortName>
        <shortName>HNF-3B</shortName>
    </recommendedName>
    <alternativeName>
        <fullName>Forkhead box protein A2</fullName>
    </alternativeName>
</protein>
<reference key="1">
    <citation type="journal article" date="1991" name="Genes Dev.">
        <title>Hepatocyte nuclear factor 3 alpha belongs to a gene family in mammals that is homologous to the Drosophila homeotic gene fork head.</title>
        <authorList>
            <person name="Lai E."/>
            <person name="Prezioso V.R."/>
            <person name="Tao W.F."/>
            <person name="Chen W.S."/>
            <person name="Darnell J.E. Jr."/>
        </authorList>
    </citation>
    <scope>NUCLEOTIDE SEQUENCE [MRNA]</scope>
</reference>
<reference key="2">
    <citation type="journal article" date="1992" name="Mol. Cell. Biol.">
        <title>Hepatocyte nuclear factor 3 beta contains two transcriptional activation domains, one of which is novel and conserved with the Drosophila fork head protein.</title>
        <authorList>
            <person name="Pani L."/>
            <person name="Overdier D.G."/>
            <person name="Porcella A."/>
            <person name="Qian X."/>
            <person name="Lai E."/>
            <person name="Costa R.H."/>
        </authorList>
    </citation>
    <scope>TRANSACTIVATION DOMAIN</scope>
</reference>
<reference key="3">
    <citation type="journal article" date="1994" name="Mol. Cell. Biol.">
        <title>The DNA-binding specificity of the hepatocyte nuclear factor 3/forkhead domain is influenced by amino-acid residues adjacent to the recognition helix.</title>
        <authorList>
            <person name="Overdier D.G."/>
            <person name="Porcella A."/>
            <person name="Costa R.H."/>
        </authorList>
    </citation>
    <scope>DNA-BINDING CONSENSUS SEQUENCE</scope>
</reference>
<reference key="4">
    <citation type="journal article" date="1995" name="Nucleic Acids Res.">
        <title>Analysis of hepatocyte nuclear factor-3 beta protein domains required for transcriptional activation and nuclear targeting.</title>
        <authorList>
            <person name="Qian X."/>
            <person name="Costa R.H."/>
        </authorList>
    </citation>
    <scope>TRANSACTIVATION DOMAIN</scope>
    <scope>SUBCELLULAR LOCATION</scope>
    <scope>PHOSPHORYLATION</scope>
    <scope>MUTAGENESIS OF TYR-18</scope>
</reference>
<reference key="5">
    <citation type="journal article" date="2000" name="J. Biol. Chem.">
        <title>Transducin-like enhancer of split proteins, the human homologs of Drosophila groucho, interact with hepatic nuclear factor 3beta.</title>
        <authorList>
            <person name="Wang J.-C."/>
            <person name="Waltner-Law M."/>
            <person name="Yamada K."/>
            <person name="Osawa H."/>
            <person name="Stifani S."/>
            <person name="Granner D.K."/>
        </authorList>
    </citation>
    <scope>INTERACTION WITH TLE1</scope>
</reference>
<reference key="6">
    <citation type="journal article" date="2000" name="J. Biol. Chem.">
        <title>Synergistic action of hepatocyte nuclear factors 3 and 6 on CYP2C12 gene expression and suppression by growth hormone-activated STAT5b. Proposed model for female specific expression of CYP2C12 in adult rat liver.</title>
        <authorList>
            <person name="Delesque-Touchard N."/>
            <person name="Park S.H."/>
            <person name="Waxman D.J."/>
        </authorList>
    </citation>
    <scope>FUNCTION</scope>
</reference>
<reference key="7">
    <citation type="journal article" date="2003" name="Proc. Natl. Acad. Sci. U.S.A.">
        <title>Insulin regulates the activity of forkhead transcription factor Hnf-3beta/Foxa-2 by Akt-mediated phosphorylation and nuclear/cytosolic localization.</title>
        <authorList>
            <person name="Wolfrum C."/>
            <person name="Besser D."/>
            <person name="Luca E."/>
            <person name="Stoffel M."/>
        </authorList>
    </citation>
    <scope>PHOSPHORYLATION AT THR-156</scope>
    <scope>SUBCELLULAR LOCATION</scope>
    <scope>INTERACTION WITH AKT1</scope>
    <scope>MUTAGENESIS OF ARG-153 AND THR-156</scope>
</reference>
<reference key="8">
    <citation type="journal article" date="2009" name="J. Biol. Chem.">
        <title>Identification of DNA-dependent protein kinase as a cofactor for the forkhead transcription factor FoxA2.</title>
        <authorList>
            <person name="Nock A."/>
            <person name="Ascano J.M."/>
            <person name="Jones T."/>
            <person name="Barrero M.J."/>
            <person name="Sugiyama N."/>
            <person name="Tomita M."/>
            <person name="Ishihama Y."/>
            <person name="Malik S."/>
        </authorList>
    </citation>
    <scope>FUNCTION</scope>
    <scope>INTERACTION WITH PRKDC</scope>
    <scope>PHOSPHORYLATION AT SER-212; SER-283; SER-303; SER-306; SER-307; SER-309; SER-437 AND SER-458</scope>
    <scope>MUTAGENESIS OF THR-280 AND SER-283</scope>
</reference>
<reference key="9">
    <citation type="journal article" date="2009" name="J. Biol. Chem.">
        <title>Nuclear export-independent inhibition of Foxa2 by insulin.</title>
        <authorList>
            <person name="Howell J.J."/>
            <person name="Stoffel M."/>
        </authorList>
    </citation>
    <scope>SUBCELLULAR LOCATION</scope>
    <scope>NUCLEAR LOCALIZATION SIGNAL</scope>
    <scope>MUTAGENESIS OF LEU-110; LEU-113 AND THR-156</scope>
</reference>
<feature type="chain" id="PRO_0000091797" description="Hepatocyte nuclear factor 3-beta">
    <location>
        <begin position="1"/>
        <end position="458"/>
    </location>
</feature>
<feature type="DNA-binding region" description="Fork-head" evidence="4">
    <location>
        <begin position="159"/>
        <end position="252"/>
    </location>
</feature>
<feature type="region of interest" description="Transactivation domain 1">
    <location>
        <begin position="14"/>
        <end position="93"/>
    </location>
</feature>
<feature type="region of interest" description="Disordered" evidence="5">
    <location>
        <begin position="286"/>
        <end position="365"/>
    </location>
</feature>
<feature type="region of interest" description="Transactivation domain 2">
    <location>
        <begin position="361"/>
        <end position="458"/>
    </location>
</feature>
<feature type="short sequence motif" description="Nuclear localization signal" evidence="10">
    <location>
        <begin position="106"/>
        <end position="113"/>
    </location>
</feature>
<feature type="compositionally biased region" description="Polar residues" evidence="5">
    <location>
        <begin position="294"/>
        <end position="310"/>
    </location>
</feature>
<feature type="compositionally biased region" description="Low complexity" evidence="5">
    <location>
        <begin position="339"/>
        <end position="352"/>
    </location>
</feature>
<feature type="modified residue" description="Phosphothreonine; by PKB/AKT1" evidence="8">
    <location>
        <position position="156"/>
    </location>
</feature>
<feature type="modified residue" description="Phosphoserine" evidence="9">
    <location>
        <position position="212"/>
    </location>
</feature>
<feature type="modified residue" description="Phosphoserine" evidence="9">
    <location>
        <position position="283"/>
    </location>
</feature>
<feature type="modified residue" description="Phosphothreonine" evidence="2">
    <location>
        <position position="301"/>
    </location>
</feature>
<feature type="modified residue" description="Phosphoserine" evidence="9">
    <location>
        <position position="303"/>
    </location>
</feature>
<feature type="modified residue" description="Phosphoserine" evidence="9">
    <location>
        <position position="306"/>
    </location>
</feature>
<feature type="modified residue" description="Phosphoserine" evidence="9">
    <location>
        <position position="307"/>
    </location>
</feature>
<feature type="modified residue" description="Phosphoserine" evidence="9">
    <location>
        <position position="309"/>
    </location>
</feature>
<feature type="modified residue" description="Phosphoserine" evidence="9">
    <location>
        <position position="437"/>
    </location>
</feature>
<feature type="modified residue" description="Phosphoserine" evidence="9">
    <location>
        <position position="458"/>
    </location>
</feature>
<feature type="mutagenesis site" description="Reduces transcriptional activation." evidence="11">
    <original>Y</original>
    <variation>P</variation>
    <location>
        <position position="18"/>
    </location>
</feature>
<feature type="mutagenesis site" description="Inhibits nuclear export; when associated with A-113." evidence="10">
    <original>L</original>
    <variation>A</variation>
    <location>
        <position position="110"/>
    </location>
</feature>
<feature type="mutagenesis site" description="Inhibits nuclear export; when associated with A-110." evidence="10">
    <original>L</original>
    <variation>A</variation>
    <location>
        <position position="113"/>
    </location>
</feature>
<feature type="mutagenesis site" description="Abolishes interaction with AKT1." evidence="8">
    <original>R</original>
    <variation>K</variation>
    <location>
        <position position="153"/>
    </location>
</feature>
<feature type="mutagenesis site" description="Constitutive active. Abolishes phosphorylation by PKB/AKT1; inhibits nuclear export; no effect on DNA binding." evidence="8 10">
    <original>T</original>
    <variation>A</variation>
    <location>
        <position position="156"/>
    </location>
</feature>
<feature type="mutagenesis site" description="Impairs transcriptional activation; when associated with A-283." evidence="9">
    <original>T</original>
    <variation>A</variation>
    <location>
        <position position="280"/>
    </location>
</feature>
<feature type="mutagenesis site" description="Abolishes in vitro phosphorylation by PRKDC. Impairs transcriptional activation; when associated with A-280." evidence="9">
    <original>S</original>
    <variation>A</variation>
    <location>
        <position position="283"/>
    </location>
</feature>
<keyword id="KW-0010">Activator</keyword>
<keyword id="KW-0156">Chromatin regulator</keyword>
<keyword id="KW-0963">Cytoplasm</keyword>
<keyword id="KW-0217">Developmental protein</keyword>
<keyword id="KW-0238">DNA-binding</keyword>
<keyword id="KW-0539">Nucleus</keyword>
<keyword id="KW-0597">Phosphoprotein</keyword>
<keyword id="KW-1185">Reference proteome</keyword>
<keyword id="KW-0804">Transcription</keyword>
<keyword id="KW-0805">Transcription regulation</keyword>
<name>FOXA2_RAT</name>
<evidence type="ECO:0000250" key="1"/>
<evidence type="ECO:0000250" key="2">
    <source>
        <dbReference type="UniProtKB" id="P35583"/>
    </source>
</evidence>
<evidence type="ECO:0000250" key="3">
    <source>
        <dbReference type="UniProtKB" id="Q9Y261"/>
    </source>
</evidence>
<evidence type="ECO:0000255" key="4">
    <source>
        <dbReference type="PROSITE-ProRule" id="PRU00089"/>
    </source>
</evidence>
<evidence type="ECO:0000256" key="5">
    <source>
        <dbReference type="SAM" id="MobiDB-lite"/>
    </source>
</evidence>
<evidence type="ECO:0000269" key="6">
    <source>
    </source>
</evidence>
<evidence type="ECO:0000269" key="7">
    <source>
    </source>
</evidence>
<evidence type="ECO:0000269" key="8">
    <source>
    </source>
</evidence>
<evidence type="ECO:0000269" key="9">
    <source>
    </source>
</evidence>
<evidence type="ECO:0000269" key="10">
    <source>
    </source>
</evidence>
<evidence type="ECO:0000269" key="11">
    <source>
    </source>
</evidence>
<organism>
    <name type="scientific">Rattus norvegicus</name>
    <name type="common">Rat</name>
    <dbReference type="NCBI Taxonomy" id="10116"/>
    <lineage>
        <taxon>Eukaryota</taxon>
        <taxon>Metazoa</taxon>
        <taxon>Chordata</taxon>
        <taxon>Craniata</taxon>
        <taxon>Vertebrata</taxon>
        <taxon>Euteleostomi</taxon>
        <taxon>Mammalia</taxon>
        <taxon>Eutheria</taxon>
        <taxon>Euarchontoglires</taxon>
        <taxon>Glires</taxon>
        <taxon>Rodentia</taxon>
        <taxon>Myomorpha</taxon>
        <taxon>Muroidea</taxon>
        <taxon>Muridae</taxon>
        <taxon>Murinae</taxon>
        <taxon>Rattus</taxon>
    </lineage>
</organism>
<proteinExistence type="evidence at protein level"/>
<sequence>MLGAVKMEGHEPSDWSSYYAEPEGYSSVSNMNASLGMNGMNTYMSMSAAAMGSGSGNMSAGSMNMSSYVGAGMSPSLAGMSPGAGAMAGMSGSAGAAGVAGMGPHLSPSLSPLGGQAAGAMGGLAPYANMNSMSPMYGQAGLSRARDPKTYRRSYTHAKPPYSYISLITMAIQQSPNKMLTLSEIYQWIMDLFPFYRQNQQRWQNSIRHSLSFNDFLKVPRAPDKPGKGSFWTLHPDSGNMFENGCYLRRQKRFKCENELALKEAAGAGSGGGKKTAPGTQASQVQLGEAAGSASETPAGTESPHSSASPCQEHKRGGLSELKGTPASALSPPEPAPSPGQQQQAAAHLLGPPHHPGLPPEAHLKPEHHYAFNHPFSINNLMSSEQQHHHSHHHHQPHKMDLKTYEQVMHYPGGYGSPMPGSLAMGPVTNKAGLDASPLAADTSYYQGVYSRPIMNSS</sequence>
<comment type="function">
    <text evidence="1 7 9">Transcription factor that is involved in embryonic development, establishment of tissue-specific gene expression and regulation of gene expression in differentiated tissues. Is thought to act as a 'pioneer' factor opening the compacted chromatin for other proteins through interactions with nucleosomal core histones and thereby replacing linker histones at target enhancer and/or promoter sites. Binds DNA with the consensus sequence 5'-[AC]A[AT]T[AG]TT[GT][AG][CT]T[CT]-3' (By similarity). In embryonic development is required for notochord formation. Involved in the development of multiple endoderm-derived organ systems such as the liver, pancreas and lungs; FOXA1 and FOXA2 seem to have at least in part redundant roles. Originally described as a transcription activator for a number of liver genes such as AFP, albumin, tyrosine aminotransferase, PEPCK, etc. Interacts with the cis-acting regulatory regions of these genes. Involved in glucose homeostasis; regulates the expression of genes important for glucose sensing in pancreatic beta-cells and glucose homeostasis (By similarity). Involved in regulation of fat metabolism. Acts synergistically with ONECUT1 to activate transcription of female-specific CYP2C12; the function is inhibited by growth hormone-activated STAT5B. Acts synergistically with HNF4A to activate transcription of APOA1.</text>
</comment>
<comment type="subunit">
    <text evidence="3 6 8 9">Binds DNA as a monomer. Binds TLE1 (PubMed:10748198). Interacts with FOXA1 and FOXA3 (By similarity). Interacts with PRKDC (PubMed:19478084). Interacts with AKT1 (PubMed:14500912). Interacts with TET1; this interaction may recruit TET1 to specific genomic loci to mediate their demethylation (By similarity).</text>
</comment>
<comment type="subcellular location">
    <subcellularLocation>
        <location>Nucleus</location>
    </subcellularLocation>
    <subcellularLocation>
        <location>Cytoplasm</location>
    </subcellularLocation>
    <text>Shuttles between the nucleus and cytoplasm in a CRM1-dependent manner; in response to insulin signaling via AKT1 is exported from the nucleus.</text>
</comment>
<comment type="tissue specificity">
    <text>Liver.</text>
</comment>
<comment type="PTM">
    <text evidence="8 9 11">Phosphorylation on Thr-156 abolishes binding to target promoters and subsequent transcription activation upon insulin stimulation.</text>
</comment>
<dbReference type="EMBL" id="L09647">
    <property type="protein sequence ID" value="AAA41338.1"/>
    <property type="molecule type" value="mRNA"/>
</dbReference>
<dbReference type="PIR" id="B39533">
    <property type="entry name" value="B39533"/>
</dbReference>
<dbReference type="RefSeq" id="NP_036875.1">
    <property type="nucleotide sequence ID" value="NM_012743.1"/>
</dbReference>
<dbReference type="SMR" id="P32182"/>
<dbReference type="FunCoup" id="P32182">
    <property type="interactions" value="164"/>
</dbReference>
<dbReference type="IntAct" id="P32182">
    <property type="interactions" value="1"/>
</dbReference>
<dbReference type="STRING" id="10116.ENSRNOP00000017742"/>
<dbReference type="iPTMnet" id="P32182"/>
<dbReference type="PhosphoSitePlus" id="P32182"/>
<dbReference type="PaxDb" id="10116-ENSRNOP00000017742"/>
<dbReference type="GeneID" id="25099"/>
<dbReference type="KEGG" id="rno:25099"/>
<dbReference type="AGR" id="RGD:2808"/>
<dbReference type="CTD" id="3170"/>
<dbReference type="RGD" id="2808">
    <property type="gene designation" value="Foxa2"/>
</dbReference>
<dbReference type="eggNOG" id="KOG3563">
    <property type="taxonomic scope" value="Eukaryota"/>
</dbReference>
<dbReference type="InParanoid" id="P32182"/>
<dbReference type="PhylomeDB" id="P32182"/>
<dbReference type="PRO" id="PR:P32182"/>
<dbReference type="Proteomes" id="UP000002494">
    <property type="component" value="Unplaced"/>
</dbReference>
<dbReference type="GO" id="GO:0005737">
    <property type="term" value="C:cytoplasm"/>
    <property type="evidence" value="ECO:0007669"/>
    <property type="project" value="UniProtKB-SubCell"/>
</dbReference>
<dbReference type="GO" id="GO:0005634">
    <property type="term" value="C:nucleus"/>
    <property type="evidence" value="ECO:0000314"/>
    <property type="project" value="BHF-UCL"/>
</dbReference>
<dbReference type="GO" id="GO:0005667">
    <property type="term" value="C:transcription regulator complex"/>
    <property type="evidence" value="ECO:0000266"/>
    <property type="project" value="RGD"/>
</dbReference>
<dbReference type="GO" id="GO:0003682">
    <property type="term" value="F:chromatin binding"/>
    <property type="evidence" value="ECO:0000266"/>
    <property type="project" value="RGD"/>
</dbReference>
<dbReference type="GO" id="GO:0003677">
    <property type="term" value="F:DNA binding"/>
    <property type="evidence" value="ECO:0000266"/>
    <property type="project" value="RGD"/>
</dbReference>
<dbReference type="GO" id="GO:0001228">
    <property type="term" value="F:DNA-binding transcription activator activity, RNA polymerase II-specific"/>
    <property type="evidence" value="ECO:0000314"/>
    <property type="project" value="BHF-UCL"/>
</dbReference>
<dbReference type="GO" id="GO:0003700">
    <property type="term" value="F:DNA-binding transcription factor activity"/>
    <property type="evidence" value="ECO:0000314"/>
    <property type="project" value="RGD"/>
</dbReference>
<dbReference type="GO" id="GO:0000981">
    <property type="term" value="F:DNA-binding transcription factor activity, RNA polymerase II-specific"/>
    <property type="evidence" value="ECO:0000266"/>
    <property type="project" value="RGD"/>
</dbReference>
<dbReference type="GO" id="GO:0001227">
    <property type="term" value="F:DNA-binding transcription repressor activity, RNA polymerase II-specific"/>
    <property type="evidence" value="ECO:0000266"/>
    <property type="project" value="RGD"/>
</dbReference>
<dbReference type="GO" id="GO:0003690">
    <property type="term" value="F:double-stranded DNA binding"/>
    <property type="evidence" value="ECO:0000314"/>
    <property type="project" value="RGD"/>
</dbReference>
<dbReference type="GO" id="GO:0019900">
    <property type="term" value="F:kinase binding"/>
    <property type="evidence" value="ECO:0000353"/>
    <property type="project" value="RGD"/>
</dbReference>
<dbReference type="GO" id="GO:0003676">
    <property type="term" value="F:nucleic acid binding"/>
    <property type="evidence" value="ECO:0000266"/>
    <property type="project" value="RGD"/>
</dbReference>
<dbReference type="GO" id="GO:0019904">
    <property type="term" value="F:protein domain specific binding"/>
    <property type="evidence" value="ECO:0007669"/>
    <property type="project" value="InterPro"/>
</dbReference>
<dbReference type="GO" id="GO:0000978">
    <property type="term" value="F:RNA polymerase II cis-regulatory region sequence-specific DNA binding"/>
    <property type="evidence" value="ECO:0000314"/>
    <property type="project" value="BHF-UCL"/>
</dbReference>
<dbReference type="GO" id="GO:0061629">
    <property type="term" value="F:RNA polymerase II-specific DNA-binding transcription factor binding"/>
    <property type="evidence" value="ECO:0000353"/>
    <property type="project" value="BHF-UCL"/>
</dbReference>
<dbReference type="GO" id="GO:0043565">
    <property type="term" value="F:sequence-specific DNA binding"/>
    <property type="evidence" value="ECO:0000314"/>
    <property type="project" value="RGD"/>
</dbReference>
<dbReference type="GO" id="GO:1990837">
    <property type="term" value="F:sequence-specific double-stranded DNA binding"/>
    <property type="evidence" value="ECO:0000266"/>
    <property type="project" value="RGD"/>
</dbReference>
<dbReference type="GO" id="GO:0046332">
    <property type="term" value="F:SMAD binding"/>
    <property type="evidence" value="ECO:0000314"/>
    <property type="project" value="RGD"/>
</dbReference>
<dbReference type="GO" id="GO:0000976">
    <property type="term" value="F:transcription cis-regulatory region binding"/>
    <property type="evidence" value="ECO:0000266"/>
    <property type="project" value="RGD"/>
</dbReference>
<dbReference type="GO" id="GO:0003714">
    <property type="term" value="F:transcription corepressor activity"/>
    <property type="evidence" value="ECO:0000314"/>
    <property type="project" value="BHF-UCL"/>
</dbReference>
<dbReference type="GO" id="GO:0008344">
    <property type="term" value="P:adult locomotory behavior"/>
    <property type="evidence" value="ECO:0000250"/>
    <property type="project" value="ParkinsonsUK-UCL"/>
</dbReference>
<dbReference type="GO" id="GO:0048646">
    <property type="term" value="P:anatomical structure formation involved in morphogenesis"/>
    <property type="evidence" value="ECO:0000266"/>
    <property type="project" value="RGD"/>
</dbReference>
<dbReference type="GO" id="GO:0009653">
    <property type="term" value="P:anatomical structure morphogenesis"/>
    <property type="evidence" value="ECO:0000266"/>
    <property type="project" value="RGD"/>
</dbReference>
<dbReference type="GO" id="GO:0009952">
    <property type="term" value="P:anterior/posterior pattern specification"/>
    <property type="evidence" value="ECO:0000266"/>
    <property type="project" value="RGD"/>
</dbReference>
<dbReference type="GO" id="GO:0048468">
    <property type="term" value="P:cell development"/>
    <property type="evidence" value="ECO:0000266"/>
    <property type="project" value="RGD"/>
</dbReference>
<dbReference type="GO" id="GO:0030154">
    <property type="term" value="P:cell differentiation"/>
    <property type="evidence" value="ECO:0000318"/>
    <property type="project" value="GO_Central"/>
</dbReference>
<dbReference type="GO" id="GO:0021533">
    <property type="term" value="P:cell differentiation in hindbrain"/>
    <property type="evidence" value="ECO:0000266"/>
    <property type="project" value="RGD"/>
</dbReference>
<dbReference type="GO" id="GO:0001708">
    <property type="term" value="P:cell fate specification"/>
    <property type="evidence" value="ECO:0000250"/>
    <property type="project" value="ParkinsonsUK-UCL"/>
</dbReference>
<dbReference type="GO" id="GO:0071276">
    <property type="term" value="P:cellular response to cadmium ion"/>
    <property type="evidence" value="ECO:0000266"/>
    <property type="project" value="RGD"/>
</dbReference>
<dbReference type="GO" id="GO:0006325">
    <property type="term" value="P:chromatin organization"/>
    <property type="evidence" value="ECO:0007669"/>
    <property type="project" value="UniProtKB-KW"/>
</dbReference>
<dbReference type="GO" id="GO:0061448">
    <property type="term" value="P:connective tissue development"/>
    <property type="evidence" value="ECO:0000266"/>
    <property type="project" value="RGD"/>
</dbReference>
<dbReference type="GO" id="GO:0071542">
    <property type="term" value="P:dopaminergic neuron differentiation"/>
    <property type="evidence" value="ECO:0000250"/>
    <property type="project" value="ParkinsonsUK-UCL"/>
</dbReference>
<dbReference type="GO" id="GO:0021904">
    <property type="term" value="P:dorsal/ventral neural tube patterning"/>
    <property type="evidence" value="ECO:0000266"/>
    <property type="project" value="RGD"/>
</dbReference>
<dbReference type="GO" id="GO:0009953">
    <property type="term" value="P:dorsal/ventral pattern formation"/>
    <property type="evidence" value="ECO:0000266"/>
    <property type="project" value="RGD"/>
</dbReference>
<dbReference type="GO" id="GO:0001705">
    <property type="term" value="P:ectoderm formation"/>
    <property type="evidence" value="ECO:0000266"/>
    <property type="project" value="RGD"/>
</dbReference>
<dbReference type="GO" id="GO:0031018">
    <property type="term" value="P:endocrine pancreas development"/>
    <property type="evidence" value="ECO:0000266"/>
    <property type="project" value="RGD"/>
</dbReference>
<dbReference type="GO" id="GO:0060441">
    <property type="term" value="P:epithelial tube branching involved in lung morphogenesis"/>
    <property type="evidence" value="ECO:0000266"/>
    <property type="project" value="RGD"/>
</dbReference>
<dbReference type="GO" id="GO:0010467">
    <property type="term" value="P:gene expression"/>
    <property type="evidence" value="ECO:0000266"/>
    <property type="project" value="RGD"/>
</dbReference>
<dbReference type="GO" id="GO:0010255">
    <property type="term" value="P:glucose mediated signaling pathway"/>
    <property type="evidence" value="ECO:0000266"/>
    <property type="project" value="RGD"/>
</dbReference>
<dbReference type="GO" id="GO:0001701">
    <property type="term" value="P:in utero embryonic development"/>
    <property type="evidence" value="ECO:0000266"/>
    <property type="project" value="RGD"/>
</dbReference>
<dbReference type="GO" id="GO:0030324">
    <property type="term" value="P:lung development"/>
    <property type="evidence" value="ECO:0000266"/>
    <property type="project" value="RGD"/>
</dbReference>
<dbReference type="GO" id="GO:0060487">
    <property type="term" value="P:lung epithelial cell differentiation"/>
    <property type="evidence" value="ECO:0000266"/>
    <property type="project" value="RGD"/>
</dbReference>
<dbReference type="GO" id="GO:0048382">
    <property type="term" value="P:mesendoderm development"/>
    <property type="evidence" value="ECO:0000266"/>
    <property type="project" value="RGD"/>
</dbReference>
<dbReference type="GO" id="GO:0010719">
    <property type="term" value="P:negative regulation of epithelial to mesenchymal transition"/>
    <property type="evidence" value="ECO:0000266"/>
    <property type="project" value="RGD"/>
</dbReference>
<dbReference type="GO" id="GO:0045665">
    <property type="term" value="P:negative regulation of neuron differentiation"/>
    <property type="evidence" value="ECO:0000266"/>
    <property type="project" value="RGD"/>
</dbReference>
<dbReference type="GO" id="GO:0000122">
    <property type="term" value="P:negative regulation of transcription by RNA polymerase II"/>
    <property type="evidence" value="ECO:0000314"/>
    <property type="project" value="BHF-UCL"/>
</dbReference>
<dbReference type="GO" id="GO:0030182">
    <property type="term" value="P:neuron differentiation"/>
    <property type="evidence" value="ECO:0000266"/>
    <property type="project" value="RGD"/>
</dbReference>
<dbReference type="GO" id="GO:0048665">
    <property type="term" value="P:neuron fate specification"/>
    <property type="evidence" value="ECO:0000266"/>
    <property type="project" value="RGD"/>
</dbReference>
<dbReference type="GO" id="GO:0007219">
    <property type="term" value="P:Notch signaling pathway"/>
    <property type="evidence" value="ECO:0000266"/>
    <property type="project" value="RGD"/>
</dbReference>
<dbReference type="GO" id="GO:0007389">
    <property type="term" value="P:pattern specification process"/>
    <property type="evidence" value="ECO:0000266"/>
    <property type="project" value="RGD"/>
</dbReference>
<dbReference type="GO" id="GO:0045893">
    <property type="term" value="P:positive regulation of DNA-templated transcription"/>
    <property type="evidence" value="ECO:0000250"/>
    <property type="project" value="UniProtKB"/>
</dbReference>
<dbReference type="GO" id="GO:1904340">
    <property type="term" value="P:positive regulation of dopaminergic neuron differentiation"/>
    <property type="evidence" value="ECO:0000266"/>
    <property type="project" value="RGD"/>
</dbReference>
<dbReference type="GO" id="GO:0040019">
    <property type="term" value="P:positive regulation of embryonic development"/>
    <property type="evidence" value="ECO:0000250"/>
    <property type="project" value="UniProtKB"/>
</dbReference>
<dbReference type="GO" id="GO:2000543">
    <property type="term" value="P:positive regulation of gastrulation"/>
    <property type="evidence" value="ECO:0000250"/>
    <property type="project" value="UniProtKB"/>
</dbReference>
<dbReference type="GO" id="GO:0045666">
    <property type="term" value="P:positive regulation of neuron differentiation"/>
    <property type="evidence" value="ECO:0000266"/>
    <property type="project" value="RGD"/>
</dbReference>
<dbReference type="GO" id="GO:0045880">
    <property type="term" value="P:positive regulation of smoothened signaling pathway"/>
    <property type="evidence" value="ECO:0000266"/>
    <property type="project" value="RGD"/>
</dbReference>
<dbReference type="GO" id="GO:0045944">
    <property type="term" value="P:positive regulation of transcription by RNA polymerase II"/>
    <property type="evidence" value="ECO:0000314"/>
    <property type="project" value="BHF-UCL"/>
</dbReference>
<dbReference type="GO" id="GO:0045945">
    <property type="term" value="P:positive regulation of transcription by RNA polymerase III"/>
    <property type="evidence" value="ECO:0000266"/>
    <property type="project" value="RGD"/>
</dbReference>
<dbReference type="GO" id="GO:0090009">
    <property type="term" value="P:primitive streak formation"/>
    <property type="evidence" value="ECO:0000250"/>
    <property type="project" value="UniProtKB"/>
</dbReference>
<dbReference type="GO" id="GO:0030193">
    <property type="term" value="P:regulation of blood coagulation"/>
    <property type="evidence" value="ECO:0000266"/>
    <property type="project" value="RGD"/>
</dbReference>
<dbReference type="GO" id="GO:0006355">
    <property type="term" value="P:regulation of DNA-templated transcription"/>
    <property type="evidence" value="ECO:0000314"/>
    <property type="project" value="RGD"/>
</dbReference>
<dbReference type="GO" id="GO:0010468">
    <property type="term" value="P:regulation of gene expression"/>
    <property type="evidence" value="ECO:0000266"/>
    <property type="project" value="RGD"/>
</dbReference>
<dbReference type="GO" id="GO:0061178">
    <property type="term" value="P:regulation of insulin secretion involved in cellular response to glucose stimulus"/>
    <property type="evidence" value="ECO:0000266"/>
    <property type="project" value="RGD"/>
</dbReference>
<dbReference type="GO" id="GO:0019216">
    <property type="term" value="P:regulation of lipid metabolic process"/>
    <property type="evidence" value="ECO:0000266"/>
    <property type="project" value="RGD"/>
</dbReference>
<dbReference type="GO" id="GO:0019218">
    <property type="term" value="P:regulation of steroid metabolic process"/>
    <property type="evidence" value="ECO:0000266"/>
    <property type="project" value="RGD"/>
</dbReference>
<dbReference type="GO" id="GO:0006357">
    <property type="term" value="P:regulation of transcription by RNA polymerase II"/>
    <property type="evidence" value="ECO:0000266"/>
    <property type="project" value="RGD"/>
</dbReference>
<dbReference type="GO" id="GO:0032868">
    <property type="term" value="P:response to insulin"/>
    <property type="evidence" value="ECO:0000270"/>
    <property type="project" value="RGD"/>
</dbReference>
<dbReference type="GO" id="GO:0023019">
    <property type="term" value="P:signal transduction involved in regulation of gene expression"/>
    <property type="evidence" value="ECO:0000266"/>
    <property type="project" value="RGD"/>
</dbReference>
<dbReference type="GO" id="GO:0007224">
    <property type="term" value="P:smoothened signaling pathway"/>
    <property type="evidence" value="ECO:0000266"/>
    <property type="project" value="RGD"/>
</dbReference>
<dbReference type="GO" id="GO:0032525">
    <property type="term" value="P:somite rostral/caudal axis specification"/>
    <property type="evidence" value="ECO:0000266"/>
    <property type="project" value="RGD"/>
</dbReference>
<dbReference type="GO" id="GO:0006366">
    <property type="term" value="P:transcription by RNA polymerase II"/>
    <property type="evidence" value="ECO:0000266"/>
    <property type="project" value="RGD"/>
</dbReference>
<dbReference type="CDD" id="cd20039">
    <property type="entry name" value="FH_FOXA2"/>
    <property type="match status" value="1"/>
</dbReference>
<dbReference type="FunFam" id="1.10.10.10:FF:000042">
    <property type="entry name" value="hepatocyte nuclear factor 3-beta"/>
    <property type="match status" value="1"/>
</dbReference>
<dbReference type="Gene3D" id="1.10.10.10">
    <property type="entry name" value="Winged helix-like DNA-binding domain superfamily/Winged helix DNA-binding domain"/>
    <property type="match status" value="1"/>
</dbReference>
<dbReference type="InterPro" id="IPR013638">
    <property type="entry name" value="Fork-head_N"/>
</dbReference>
<dbReference type="InterPro" id="IPR001766">
    <property type="entry name" value="Fork_head_dom"/>
</dbReference>
<dbReference type="InterPro" id="IPR018533">
    <property type="entry name" value="Forkhead_box_C"/>
</dbReference>
<dbReference type="InterPro" id="IPR050211">
    <property type="entry name" value="FOX_domain-containing"/>
</dbReference>
<dbReference type="InterPro" id="IPR018122">
    <property type="entry name" value="TF_fork_head_CS_1"/>
</dbReference>
<dbReference type="InterPro" id="IPR030456">
    <property type="entry name" value="TF_fork_head_CS_2"/>
</dbReference>
<dbReference type="InterPro" id="IPR036388">
    <property type="entry name" value="WH-like_DNA-bd_sf"/>
</dbReference>
<dbReference type="InterPro" id="IPR036390">
    <property type="entry name" value="WH_DNA-bd_sf"/>
</dbReference>
<dbReference type="PANTHER" id="PTHR11829">
    <property type="entry name" value="FORKHEAD BOX PROTEIN"/>
    <property type="match status" value="1"/>
</dbReference>
<dbReference type="PANTHER" id="PTHR11829:SF167">
    <property type="entry name" value="HEPATOCYTE NUCLEAR FACTOR 3-BETA"/>
    <property type="match status" value="1"/>
</dbReference>
<dbReference type="Pfam" id="PF00250">
    <property type="entry name" value="Forkhead"/>
    <property type="match status" value="1"/>
</dbReference>
<dbReference type="Pfam" id="PF08430">
    <property type="entry name" value="Forkhead_N"/>
    <property type="match status" value="1"/>
</dbReference>
<dbReference type="Pfam" id="PF09354">
    <property type="entry name" value="HNF_C"/>
    <property type="match status" value="1"/>
</dbReference>
<dbReference type="PRINTS" id="PR00053">
    <property type="entry name" value="FORKHEAD"/>
</dbReference>
<dbReference type="SMART" id="SM00339">
    <property type="entry name" value="FH"/>
    <property type="match status" value="1"/>
</dbReference>
<dbReference type="SUPFAM" id="SSF46785">
    <property type="entry name" value="Winged helix' DNA-binding domain"/>
    <property type="match status" value="1"/>
</dbReference>
<dbReference type="PROSITE" id="PS00657">
    <property type="entry name" value="FORK_HEAD_1"/>
    <property type="match status" value="1"/>
</dbReference>
<dbReference type="PROSITE" id="PS00658">
    <property type="entry name" value="FORK_HEAD_2"/>
    <property type="match status" value="1"/>
</dbReference>
<dbReference type="PROSITE" id="PS50039">
    <property type="entry name" value="FORK_HEAD_3"/>
    <property type="match status" value="1"/>
</dbReference>
<gene>
    <name type="primary">Foxa2</name>
    <name type="synonym">Hnf3b</name>
    <name type="synonym">Tcf-3b</name>
    <name type="synonym">Tcf3b</name>
</gene>